<keyword id="KW-0233">DNA recombination</keyword>
<keyword id="KW-0238">DNA-binding</keyword>
<keyword id="KW-1185">Reference proteome</keyword>
<keyword id="KW-0804">Transcription</keyword>
<keyword id="KW-0805">Transcription regulation</keyword>
<keyword id="KW-0810">Translation regulation</keyword>
<feature type="chain" id="PRO_0000105045" description="Integration host factor subunit beta">
    <location>
        <begin position="1"/>
        <end position="94"/>
    </location>
</feature>
<sequence length="94" mass="10974">MIKSELFERIAEQKINISNKMIERAAKEMLEHMIISLANGKRIEIRGFGSFSLHYRSSRIGRNPKTGKSVKLNEKYVPYFKPGKKLRDRANIHK</sequence>
<protein>
    <recommendedName>
        <fullName>Integration host factor subunit beta</fullName>
        <shortName>IHF-beta</shortName>
    </recommendedName>
</protein>
<name>IHFB_BUCAI</name>
<reference key="1">
    <citation type="journal article" date="2000" name="Nature">
        <title>Genome sequence of the endocellular bacterial symbiont of aphids Buchnera sp. APS.</title>
        <authorList>
            <person name="Shigenobu S."/>
            <person name="Watanabe H."/>
            <person name="Hattori M."/>
            <person name="Sakaki Y."/>
            <person name="Ishikawa H."/>
        </authorList>
    </citation>
    <scope>NUCLEOTIDE SEQUENCE [LARGE SCALE GENOMIC DNA]</scope>
    <source>
        <strain>APS</strain>
    </source>
</reference>
<comment type="function">
    <text evidence="1">This protein is one of the two subunits of integration host factor, a specific DNA-binding protein that functions in genetic recombination as well as in transcriptional and translational control.</text>
</comment>
<comment type="subunit">
    <text evidence="1">Heterodimer of an alpha and a beta chain.</text>
</comment>
<comment type="similarity">
    <text evidence="2">Belongs to the bacterial histone-like protein family.</text>
</comment>
<evidence type="ECO:0000250" key="1"/>
<evidence type="ECO:0000305" key="2"/>
<accession>P57394</accession>
<proteinExistence type="inferred from homology"/>
<gene>
    <name type="primary">ihfB</name>
    <name type="synonym">himD</name>
    <name type="ordered locus">BU308</name>
</gene>
<dbReference type="EMBL" id="BA000003">
    <property type="protein sequence ID" value="BAB13017.1"/>
    <property type="molecule type" value="Genomic_DNA"/>
</dbReference>
<dbReference type="RefSeq" id="NP_240131.1">
    <property type="nucleotide sequence ID" value="NC_002528.1"/>
</dbReference>
<dbReference type="RefSeq" id="WP_009874261.1">
    <property type="nucleotide sequence ID" value="NZ_AP036055.1"/>
</dbReference>
<dbReference type="SMR" id="P57394"/>
<dbReference type="STRING" id="563178.BUAP5A_302"/>
<dbReference type="EnsemblBacteria" id="BAB13017">
    <property type="protein sequence ID" value="BAB13017"/>
    <property type="gene ID" value="BAB13017"/>
</dbReference>
<dbReference type="KEGG" id="buc:BU308"/>
<dbReference type="PATRIC" id="fig|107806.10.peg.319"/>
<dbReference type="eggNOG" id="COG0776">
    <property type="taxonomic scope" value="Bacteria"/>
</dbReference>
<dbReference type="HOGENOM" id="CLU_105066_2_0_6"/>
<dbReference type="Proteomes" id="UP000001806">
    <property type="component" value="Chromosome"/>
</dbReference>
<dbReference type="GO" id="GO:0005694">
    <property type="term" value="C:chromosome"/>
    <property type="evidence" value="ECO:0007669"/>
    <property type="project" value="InterPro"/>
</dbReference>
<dbReference type="GO" id="GO:0005829">
    <property type="term" value="C:cytosol"/>
    <property type="evidence" value="ECO:0007669"/>
    <property type="project" value="TreeGrafter"/>
</dbReference>
<dbReference type="GO" id="GO:0003677">
    <property type="term" value="F:DNA binding"/>
    <property type="evidence" value="ECO:0007669"/>
    <property type="project" value="UniProtKB-UniRule"/>
</dbReference>
<dbReference type="GO" id="GO:0030527">
    <property type="term" value="F:structural constituent of chromatin"/>
    <property type="evidence" value="ECO:0007669"/>
    <property type="project" value="InterPro"/>
</dbReference>
<dbReference type="GO" id="GO:0006310">
    <property type="term" value="P:DNA recombination"/>
    <property type="evidence" value="ECO:0007669"/>
    <property type="project" value="UniProtKB-UniRule"/>
</dbReference>
<dbReference type="GO" id="GO:0006355">
    <property type="term" value="P:regulation of DNA-templated transcription"/>
    <property type="evidence" value="ECO:0007669"/>
    <property type="project" value="UniProtKB-UniRule"/>
</dbReference>
<dbReference type="GO" id="GO:0006417">
    <property type="term" value="P:regulation of translation"/>
    <property type="evidence" value="ECO:0007669"/>
    <property type="project" value="UniProtKB-UniRule"/>
</dbReference>
<dbReference type="CDD" id="cd13836">
    <property type="entry name" value="IHF_B"/>
    <property type="match status" value="1"/>
</dbReference>
<dbReference type="FunFam" id="4.10.520.10:FF:000003">
    <property type="entry name" value="Integration host factor subunit beta"/>
    <property type="match status" value="1"/>
</dbReference>
<dbReference type="Gene3D" id="4.10.520.10">
    <property type="entry name" value="IHF-like DNA-binding proteins"/>
    <property type="match status" value="1"/>
</dbReference>
<dbReference type="HAMAP" id="MF_00381">
    <property type="entry name" value="IHF_beta"/>
    <property type="match status" value="1"/>
</dbReference>
<dbReference type="InterPro" id="IPR000119">
    <property type="entry name" value="Hist_DNA-bd"/>
</dbReference>
<dbReference type="InterPro" id="IPR020816">
    <property type="entry name" value="Histone-like_DNA-bd_CS"/>
</dbReference>
<dbReference type="InterPro" id="IPR010992">
    <property type="entry name" value="IHF-like_DNA-bd_dom_sf"/>
</dbReference>
<dbReference type="InterPro" id="IPR005685">
    <property type="entry name" value="IHF_beta"/>
</dbReference>
<dbReference type="NCBIfam" id="TIGR00988">
    <property type="entry name" value="hip"/>
    <property type="match status" value="1"/>
</dbReference>
<dbReference type="NCBIfam" id="NF001222">
    <property type="entry name" value="PRK00199.1"/>
    <property type="match status" value="1"/>
</dbReference>
<dbReference type="PANTHER" id="PTHR33175">
    <property type="entry name" value="DNA-BINDING PROTEIN HU"/>
    <property type="match status" value="1"/>
</dbReference>
<dbReference type="PANTHER" id="PTHR33175:SF5">
    <property type="entry name" value="INTEGRATION HOST FACTOR SUBUNIT BETA"/>
    <property type="match status" value="1"/>
</dbReference>
<dbReference type="Pfam" id="PF00216">
    <property type="entry name" value="Bac_DNA_binding"/>
    <property type="match status" value="1"/>
</dbReference>
<dbReference type="PRINTS" id="PR01727">
    <property type="entry name" value="DNABINDINGHU"/>
</dbReference>
<dbReference type="SMART" id="SM00411">
    <property type="entry name" value="BHL"/>
    <property type="match status" value="1"/>
</dbReference>
<dbReference type="SUPFAM" id="SSF47729">
    <property type="entry name" value="IHF-like DNA-binding proteins"/>
    <property type="match status" value="1"/>
</dbReference>
<dbReference type="PROSITE" id="PS00045">
    <property type="entry name" value="HISTONE_LIKE"/>
    <property type="match status" value="1"/>
</dbReference>
<organism>
    <name type="scientific">Buchnera aphidicola subsp. Acyrthosiphon pisum (strain APS)</name>
    <name type="common">Acyrthosiphon pisum symbiotic bacterium</name>
    <dbReference type="NCBI Taxonomy" id="107806"/>
    <lineage>
        <taxon>Bacteria</taxon>
        <taxon>Pseudomonadati</taxon>
        <taxon>Pseudomonadota</taxon>
        <taxon>Gammaproteobacteria</taxon>
        <taxon>Enterobacterales</taxon>
        <taxon>Erwiniaceae</taxon>
        <taxon>Buchnera</taxon>
    </lineage>
</organism>